<sequence length="37" mass="4302">MLNFSLCLYPVFILNKLVLRTQSIILHTINNASIKNR</sequence>
<protein>
    <recommendedName>
        <fullName>Uncharacterized protein VACWR204.5</fullName>
    </recommendedName>
</protein>
<name>V2045_VACCW</name>
<keyword id="KW-1185">Reference proteome</keyword>
<keyword id="KW-0732">Signal</keyword>
<comment type="similarity">
    <text evidence="2">Belongs to the orthopoxviruses VACWR204.5 protein family.</text>
</comment>
<organism>
    <name type="scientific">Vaccinia virus (strain Western Reserve)</name>
    <name type="common">VACV</name>
    <name type="synonym">Vaccinia virus (strain WR)</name>
    <dbReference type="NCBI Taxonomy" id="10254"/>
    <lineage>
        <taxon>Viruses</taxon>
        <taxon>Varidnaviria</taxon>
        <taxon>Bamfordvirae</taxon>
        <taxon>Nucleocytoviricota</taxon>
        <taxon>Pokkesviricetes</taxon>
        <taxon>Chitovirales</taxon>
        <taxon>Poxviridae</taxon>
        <taxon>Chordopoxvirinae</taxon>
        <taxon>Orthopoxvirus</taxon>
        <taxon>Vaccinia virus</taxon>
    </lineage>
</organism>
<proteinExistence type="inferred from homology"/>
<evidence type="ECO:0000255" key="1"/>
<evidence type="ECO:0000305" key="2"/>
<organismHost>
    <name type="scientific">Bos taurus</name>
    <name type="common">Bovine</name>
    <dbReference type="NCBI Taxonomy" id="9913"/>
</organismHost>
<gene>
    <name type="ordered locus">VACWR204.5</name>
</gene>
<dbReference type="EMBL" id="AY243312">
    <property type="protein sequence ID" value="AAO89483.1"/>
    <property type="molecule type" value="Genomic_DNA"/>
</dbReference>
<dbReference type="KEGG" id="vg:3707581"/>
<dbReference type="Proteomes" id="UP000000344">
    <property type="component" value="Genome"/>
</dbReference>
<accession>P0CK26</accession>
<reference key="1">
    <citation type="submission" date="2003-02" db="EMBL/GenBank/DDBJ databases">
        <title>Sequencing of the coding region of Vaccinia-WR to an average 9-fold redundancy and an error rate of 0.16/10kb.</title>
        <authorList>
            <person name="Esposito J.J."/>
            <person name="Frace A.M."/>
            <person name="Sammons S.A."/>
            <person name="Olsen-Rasmussen M."/>
            <person name="Osborne J."/>
            <person name="Wohlhueter R."/>
        </authorList>
    </citation>
    <scope>NUCLEOTIDE SEQUENCE [LARGE SCALE GENOMIC DNA]</scope>
</reference>
<feature type="signal peptide" evidence="1">
    <location>
        <begin position="1"/>
        <end position="23"/>
    </location>
</feature>
<feature type="chain" id="PRO_0000412623" description="Uncharacterized protein VACWR204.5">
    <location>
        <begin position="24"/>
        <end position="37"/>
    </location>
</feature>